<proteinExistence type="evidence at transcript level"/>
<name>WSD9_ARATH</name>
<gene>
    <name evidence="6" type="primary">WSD9</name>
    <name evidence="8" type="ordered locus">At5g22490</name>
    <name evidence="9" type="ORF">MQJ16.3</name>
</gene>
<reference key="1">
    <citation type="journal article" date="1998" name="DNA Res.">
        <title>Structural analysis of Arabidopsis thaliana chromosome 5. VI. Sequence features of the regions of 1,367,185 bp covered by 19 physically assigned P1 and TAC clones.</title>
        <authorList>
            <person name="Kotani H."/>
            <person name="Nakamura Y."/>
            <person name="Sato S."/>
            <person name="Asamizu E."/>
            <person name="Kaneko T."/>
            <person name="Miyajima N."/>
            <person name="Tabata S."/>
        </authorList>
    </citation>
    <scope>NUCLEOTIDE SEQUENCE [LARGE SCALE GENOMIC DNA]</scope>
    <source>
        <strain>cv. Columbia</strain>
    </source>
</reference>
<reference key="2">
    <citation type="journal article" date="2017" name="Plant J.">
        <title>Araport11: a complete reannotation of the Arabidopsis thaliana reference genome.</title>
        <authorList>
            <person name="Cheng C.Y."/>
            <person name="Krishnakumar V."/>
            <person name="Chan A.P."/>
            <person name="Thibaud-Nissen F."/>
            <person name="Schobel S."/>
            <person name="Town C.D."/>
        </authorList>
    </citation>
    <scope>GENOME REANNOTATION</scope>
    <source>
        <strain>cv. Columbia</strain>
    </source>
</reference>
<reference key="3">
    <citation type="journal article" date="2003" name="J. Biol. Chem.">
        <title>A novel bifunctional wax ester synthase/acyl-CoA:diacylglycerol acyltransferase mediates wax ester and triacylglycerol biosynthesis in Acinetobacter calcoaceticus ADP1.</title>
        <authorList>
            <person name="Kalscheuer R."/>
            <person name="Steinbuchel A."/>
        </authorList>
    </citation>
    <scope>GENE FAMILY</scope>
</reference>
<reference key="4">
    <citation type="journal article" date="2008" name="Plant Physiol.">
        <title>Identification of the wax ester synthase/acyl-coenzyme A: diacylglycerol acyltransferase WSD1 required for stem wax ester biosynthesis in Arabidopsis.</title>
        <authorList>
            <person name="Li F."/>
            <person name="Wu X."/>
            <person name="Lam P."/>
            <person name="Bird D."/>
            <person name="Zheng H."/>
            <person name="Samuels A.L."/>
            <person name="Jetter R."/>
            <person name="Kunst L."/>
        </authorList>
    </citation>
    <scope>GENE FAMILY</scope>
    <scope>NOMENCLATURE</scope>
</reference>
<reference key="5">
    <citation type="journal article" date="2013" name="Arabidopsis Book">
        <title>Acyl-lipid metabolism.</title>
        <authorList>
            <person name="Li-Beisson Y."/>
            <person name="Shorrosh B."/>
            <person name="Beisson F."/>
            <person name="Andersson M.X."/>
            <person name="Arondel V."/>
            <person name="Bates P.D."/>
            <person name="Baud S."/>
            <person name="Bird D."/>
            <person name="Debono A."/>
            <person name="Durrett T.P."/>
            <person name="Franke R.B."/>
            <person name="Graham I.A."/>
            <person name="Katayama K."/>
            <person name="Kelly A.A."/>
            <person name="Larson T."/>
            <person name="Markham J.E."/>
            <person name="Miquel M."/>
            <person name="Molina I."/>
            <person name="Nishida I."/>
            <person name="Rowland O."/>
            <person name="Samuels L."/>
            <person name="Schmid K.M."/>
            <person name="Wada H."/>
            <person name="Welti R."/>
            <person name="Xu C."/>
            <person name="Zallot R."/>
            <person name="Ohlrogge J."/>
        </authorList>
    </citation>
    <scope>REVIEW ON ACYL-LIPID METABOLISM</scope>
</reference>
<reference key="6">
    <citation type="journal article" date="2019" name="Plant J.">
        <title>Surface wax esters contribute to drought tolerance in Arabidopsis.</title>
        <authorList>
            <person name="Patwari P."/>
            <person name="Salewski V."/>
            <person name="Gutbrod K."/>
            <person name="Kreszies T."/>
            <person name="Dresen-Scholz B."/>
            <person name="Peisker H."/>
            <person name="Steiner U."/>
            <person name="Meyer A.J."/>
            <person name="Schreiber L."/>
            <person name="Doermann P."/>
        </authorList>
    </citation>
    <scope>TISSUE SPECIFICITY</scope>
    <source>
        <strain>cv. Columbia</strain>
    </source>
</reference>
<evidence type="ECO:0000250" key="1">
    <source>
        <dbReference type="UniProtKB" id="Q5KS41"/>
    </source>
</evidence>
<evidence type="ECO:0000250" key="2">
    <source>
        <dbReference type="UniProtKB" id="Q93ZR6"/>
    </source>
</evidence>
<evidence type="ECO:0000255" key="3"/>
<evidence type="ECO:0000255" key="4">
    <source>
        <dbReference type="PROSITE-ProRule" id="PRU00498"/>
    </source>
</evidence>
<evidence type="ECO:0000269" key="5">
    <source>
    </source>
</evidence>
<evidence type="ECO:0000303" key="6">
    <source>
    </source>
</evidence>
<evidence type="ECO:0000305" key="7"/>
<evidence type="ECO:0000312" key="8">
    <source>
        <dbReference type="Araport" id="AT5G22490"/>
    </source>
</evidence>
<evidence type="ECO:0000312" key="9">
    <source>
        <dbReference type="EMBL" id="AED93033.1"/>
    </source>
</evidence>
<dbReference type="EC" id="2.3.1.20" evidence="2"/>
<dbReference type="EC" id="2.3.1.75" evidence="2"/>
<dbReference type="EMBL" id="AB012244">
    <property type="protein sequence ID" value="BAB09121.1"/>
    <property type="molecule type" value="Genomic_DNA"/>
</dbReference>
<dbReference type="EMBL" id="CP002688">
    <property type="protein sequence ID" value="AED93033.1"/>
    <property type="molecule type" value="Genomic_DNA"/>
</dbReference>
<dbReference type="RefSeq" id="NP_197641.1">
    <property type="nucleotide sequence ID" value="NM_122154.2"/>
</dbReference>
<dbReference type="SMR" id="Q9FK89"/>
<dbReference type="STRING" id="3702.Q9FK89"/>
<dbReference type="GlyCosmos" id="Q9FK89">
    <property type="glycosylation" value="1 site, No reported glycans"/>
</dbReference>
<dbReference type="GlyGen" id="Q9FK89">
    <property type="glycosylation" value="2 sites"/>
</dbReference>
<dbReference type="iPTMnet" id="Q9FK89"/>
<dbReference type="PaxDb" id="3702-AT5G22490.1"/>
<dbReference type="EnsemblPlants" id="AT5G22490.1">
    <property type="protein sequence ID" value="AT5G22490.1"/>
    <property type="gene ID" value="AT5G22490"/>
</dbReference>
<dbReference type="GeneID" id="832310"/>
<dbReference type="Gramene" id="AT5G22490.1">
    <property type="protein sequence ID" value="AT5G22490.1"/>
    <property type="gene ID" value="AT5G22490"/>
</dbReference>
<dbReference type="KEGG" id="ath:AT5G22490"/>
<dbReference type="Araport" id="AT5G22490"/>
<dbReference type="TAIR" id="AT5G22490"/>
<dbReference type="eggNOG" id="ENOG502QU8B">
    <property type="taxonomic scope" value="Eukaryota"/>
</dbReference>
<dbReference type="HOGENOM" id="CLU_027831_0_0_1"/>
<dbReference type="InParanoid" id="Q9FK89"/>
<dbReference type="OMA" id="IHCQSYA"/>
<dbReference type="PhylomeDB" id="Q9FK89"/>
<dbReference type="UniPathway" id="UPA00282"/>
<dbReference type="PRO" id="PR:Q9FK89"/>
<dbReference type="Proteomes" id="UP000006548">
    <property type="component" value="Chromosome 5"/>
</dbReference>
<dbReference type="ExpressionAtlas" id="Q9FK89">
    <property type="expression patterns" value="baseline and differential"/>
</dbReference>
<dbReference type="GO" id="GO:0005789">
    <property type="term" value="C:endoplasmic reticulum membrane"/>
    <property type="evidence" value="ECO:0007669"/>
    <property type="project" value="UniProtKB-SubCell"/>
</dbReference>
<dbReference type="GO" id="GO:0005886">
    <property type="term" value="C:plasma membrane"/>
    <property type="evidence" value="ECO:0007669"/>
    <property type="project" value="UniProtKB-SubCell"/>
</dbReference>
<dbReference type="GO" id="GO:0004144">
    <property type="term" value="F:diacylglycerol O-acyltransferase activity"/>
    <property type="evidence" value="ECO:0007669"/>
    <property type="project" value="UniProtKB-EC"/>
</dbReference>
<dbReference type="GO" id="GO:0047196">
    <property type="term" value="F:long-chain-alcohol O-fatty-acyltransferase activity"/>
    <property type="evidence" value="ECO:0007669"/>
    <property type="project" value="UniProtKB-EC"/>
</dbReference>
<dbReference type="GO" id="GO:0019432">
    <property type="term" value="P:triglyceride biosynthetic process"/>
    <property type="evidence" value="ECO:0007669"/>
    <property type="project" value="UniProtKB-UniPathway"/>
</dbReference>
<dbReference type="Gene3D" id="3.30.559.10">
    <property type="entry name" value="Chloramphenicol acetyltransferase-like domain"/>
    <property type="match status" value="1"/>
</dbReference>
<dbReference type="InterPro" id="IPR023213">
    <property type="entry name" value="CAT-like_dom_sf"/>
</dbReference>
<dbReference type="InterPro" id="IPR045034">
    <property type="entry name" value="O-acyltransferase_WSD1-like"/>
</dbReference>
<dbReference type="InterPro" id="IPR009721">
    <property type="entry name" value="O-acyltransferase_WSD1_C"/>
</dbReference>
<dbReference type="InterPro" id="IPR004255">
    <property type="entry name" value="O-acyltransferase_WSD1_N"/>
</dbReference>
<dbReference type="PANTHER" id="PTHR31650">
    <property type="entry name" value="O-ACYLTRANSFERASE (WSD1-LIKE) FAMILY PROTEIN"/>
    <property type="match status" value="1"/>
</dbReference>
<dbReference type="PANTHER" id="PTHR31650:SF44">
    <property type="entry name" value="WAX ESTER SYNTHASE_DIACYLGLYCEROL ACYLTRANSFERASE 10-RELATED"/>
    <property type="match status" value="1"/>
</dbReference>
<dbReference type="Pfam" id="PF06974">
    <property type="entry name" value="WS_DGAT_C"/>
    <property type="match status" value="1"/>
</dbReference>
<dbReference type="Pfam" id="PF03007">
    <property type="entry name" value="WS_DGAT_cat"/>
    <property type="match status" value="1"/>
</dbReference>
<dbReference type="SUPFAM" id="SSF52777">
    <property type="entry name" value="CoA-dependent acyltransferases"/>
    <property type="match status" value="1"/>
</dbReference>
<organism>
    <name type="scientific">Arabidopsis thaliana</name>
    <name type="common">Mouse-ear cress</name>
    <dbReference type="NCBI Taxonomy" id="3702"/>
    <lineage>
        <taxon>Eukaryota</taxon>
        <taxon>Viridiplantae</taxon>
        <taxon>Streptophyta</taxon>
        <taxon>Embryophyta</taxon>
        <taxon>Tracheophyta</taxon>
        <taxon>Spermatophyta</taxon>
        <taxon>Magnoliopsida</taxon>
        <taxon>eudicotyledons</taxon>
        <taxon>Gunneridae</taxon>
        <taxon>Pentapetalae</taxon>
        <taxon>rosids</taxon>
        <taxon>malvids</taxon>
        <taxon>Brassicales</taxon>
        <taxon>Brassicaceae</taxon>
        <taxon>Camelineae</taxon>
        <taxon>Arabidopsis</taxon>
    </lineage>
</organism>
<feature type="chain" id="PRO_0000452619" description="Wax ester synthase/diacylglycerol acyltransferase 9">
    <location>
        <begin position="1"/>
        <end position="482"/>
    </location>
</feature>
<feature type="topological domain" description="Cytoplasmic" evidence="7">
    <location>
        <begin position="1"/>
        <end position="195"/>
    </location>
</feature>
<feature type="transmembrane region" description="Helical" evidence="3">
    <location>
        <begin position="196"/>
        <end position="216"/>
    </location>
</feature>
<feature type="topological domain" description="Lumenal" evidence="7">
    <location>
        <begin position="217"/>
        <end position="328"/>
    </location>
</feature>
<feature type="transmembrane region" description="Helical" evidence="3">
    <location>
        <begin position="329"/>
        <end position="349"/>
    </location>
</feature>
<feature type="topological domain" description="Cytoplasmic" evidence="7">
    <location>
        <begin position="350"/>
        <end position="366"/>
    </location>
</feature>
<feature type="transmembrane region" description="Helical" evidence="3">
    <location>
        <begin position="367"/>
        <end position="387"/>
    </location>
</feature>
<feature type="topological domain" description="Lumenal" evidence="7">
    <location>
        <begin position="388"/>
        <end position="482"/>
    </location>
</feature>
<feature type="active site" description="Proton acceptor" evidence="3">
    <location>
        <position position="140"/>
    </location>
</feature>
<feature type="glycosylation site" description="N-linked (GlcNAc...) asparagine" evidence="4">
    <location>
        <position position="394"/>
    </location>
</feature>
<keyword id="KW-0012">Acyltransferase</keyword>
<keyword id="KW-1003">Cell membrane</keyword>
<keyword id="KW-0256">Endoplasmic reticulum</keyword>
<keyword id="KW-0325">Glycoprotein</keyword>
<keyword id="KW-0472">Membrane</keyword>
<keyword id="KW-1185">Reference proteome</keyword>
<keyword id="KW-0808">Transferase</keyword>
<keyword id="KW-0812">Transmembrane</keyword>
<keyword id="KW-1133">Transmembrane helix</keyword>
<accession>Q9FK89</accession>
<protein>
    <recommendedName>
        <fullName evidence="6">Wax ester synthase/diacylglycerol acyltransferase 9</fullName>
        <shortName evidence="6">WS/DGAT 2</shortName>
    </recommendedName>
    <alternativeName>
        <fullName evidence="6">Diacylglycerol O-acyltransferase WSD9</fullName>
        <ecNumber evidence="2">2.3.1.20</ecNumber>
    </alternativeName>
    <alternativeName>
        <fullName evidence="6">Long-chain-alcohol O-fatty-acyltransferase WSD9</fullName>
        <ecNumber evidence="2">2.3.1.75</ecNumber>
    </alternativeName>
</protein>
<sequence>MEKKMKEEEEEPLSPMARAFQEPSIDCGIVIKFGCKTKINPDVIVDSLKLNVFKHPRFCSLLDDDGTKWLRTDVVNVEEHVFVPDIDPKLTEEDVEWFVEDYISSITMIPLDRTKPLWEVHILNAKTSDAEAICVIRCHHALGDGVSILSLILASTRKTSEPEAFSTLPVPKCRESYNHRRGFSFFRLVLVVCSTVRLIWNTLVDSFLCMATIFFLKDTDTPLKGKPGAIKKFSHRIVSLDDIKLIKNAMEMTINDVLLGVTEAALTRYLHQSYDKTNEEAGTSLTPNRQDLLDRIRLRSLIVVNLRPTGSQSIADMMAKGSKCRWGNYISVILFPFTIALQSDPLVYLSNVKSMIDRKKNSLITYIIYTFSEFVIKAFGINVAVAFQRKIMLNTTMCISNLPGPTEEVSFHGHPIAYFAPSIYGLPQALTIHYLSYANKMIISVAVDPMIIDAHKLCDELEESLKNMKLAILEKGLPNHVN</sequence>
<comment type="function">
    <text evidence="2">Bifunctional wax ester synthase/diacylglycerol acyltransferase (By similarity). Involved in cuticular wax biosynthesis (By similarity).</text>
</comment>
<comment type="catalytic activity">
    <reaction evidence="2">
        <text>an acyl-CoA + a 1,2-diacyl-sn-glycerol = a triacyl-sn-glycerol + CoA</text>
        <dbReference type="Rhea" id="RHEA:10868"/>
        <dbReference type="ChEBI" id="CHEBI:17815"/>
        <dbReference type="ChEBI" id="CHEBI:57287"/>
        <dbReference type="ChEBI" id="CHEBI:58342"/>
        <dbReference type="ChEBI" id="CHEBI:64615"/>
        <dbReference type="EC" id="2.3.1.20"/>
    </reaction>
</comment>
<comment type="catalytic activity">
    <reaction evidence="2">
        <text>a long chain fatty alcohol + a fatty acyl-CoA = a wax ester + CoA</text>
        <dbReference type="Rhea" id="RHEA:38443"/>
        <dbReference type="ChEBI" id="CHEBI:10036"/>
        <dbReference type="ChEBI" id="CHEBI:17135"/>
        <dbReference type="ChEBI" id="CHEBI:57287"/>
        <dbReference type="ChEBI" id="CHEBI:77636"/>
        <dbReference type="EC" id="2.3.1.75"/>
    </reaction>
</comment>
<comment type="pathway">
    <text evidence="2">Glycerolipid metabolism; triacylglycerol biosynthesis.</text>
</comment>
<comment type="pathway">
    <text evidence="2">Lipid metabolism.</text>
</comment>
<comment type="subcellular location">
    <subcellularLocation>
        <location evidence="1">Cell membrane</location>
        <topology evidence="3">Single-pass membrane protein</topology>
    </subcellularLocation>
    <subcellularLocation>
        <location evidence="2">Endoplasmic reticulum membrane</location>
        <topology evidence="3">Multi-pass membrane protein</topology>
    </subcellularLocation>
</comment>
<comment type="tissue specificity">
    <text evidence="5">Mostly expressed in stems and siliques.</text>
</comment>
<comment type="similarity">
    <text evidence="7">In the N-terminal section; belongs to the long-chain O-acyltransferase family.</text>
</comment>